<protein>
    <recommendedName>
        <fullName evidence="1">Phosphoribosylaminoimidazole-succinocarboxamide synthase</fullName>
        <ecNumber evidence="1">6.3.2.6</ecNumber>
    </recommendedName>
    <alternativeName>
        <fullName evidence="1">SAICAR synthetase</fullName>
    </alternativeName>
</protein>
<feature type="chain" id="PRO_1000076446" description="Phosphoribosylaminoimidazole-succinocarboxamide synthase">
    <location>
        <begin position="1"/>
        <end position="254"/>
    </location>
</feature>
<proteinExistence type="inferred from homology"/>
<comment type="catalytic activity">
    <reaction evidence="1">
        <text>5-amino-1-(5-phospho-D-ribosyl)imidazole-4-carboxylate + L-aspartate + ATP = (2S)-2-[5-amino-1-(5-phospho-beta-D-ribosyl)imidazole-4-carboxamido]succinate + ADP + phosphate + 2 H(+)</text>
        <dbReference type="Rhea" id="RHEA:22628"/>
        <dbReference type="ChEBI" id="CHEBI:15378"/>
        <dbReference type="ChEBI" id="CHEBI:29991"/>
        <dbReference type="ChEBI" id="CHEBI:30616"/>
        <dbReference type="ChEBI" id="CHEBI:43474"/>
        <dbReference type="ChEBI" id="CHEBI:58443"/>
        <dbReference type="ChEBI" id="CHEBI:77657"/>
        <dbReference type="ChEBI" id="CHEBI:456216"/>
        <dbReference type="EC" id="6.3.2.6"/>
    </reaction>
</comment>
<comment type="pathway">
    <text evidence="1">Purine metabolism; IMP biosynthesis via de novo pathway; 5-amino-1-(5-phospho-D-ribosyl)imidazole-4-carboxamide from 5-amino-1-(5-phospho-D-ribosyl)imidazole-4-carboxylate: step 1/2.</text>
</comment>
<comment type="similarity">
    <text evidence="1">Belongs to the SAICAR synthetase family.</text>
</comment>
<keyword id="KW-0067">ATP-binding</keyword>
<keyword id="KW-0436">Ligase</keyword>
<keyword id="KW-0547">Nucleotide-binding</keyword>
<keyword id="KW-0658">Purine biosynthesis</keyword>
<keyword id="KW-1185">Reference proteome</keyword>
<dbReference type="EC" id="6.3.2.6" evidence="1"/>
<dbReference type="EMBL" id="CP000872">
    <property type="protein sequence ID" value="ABX61922.1"/>
    <property type="molecule type" value="Genomic_DNA"/>
</dbReference>
<dbReference type="RefSeq" id="WP_004688254.1">
    <property type="nucleotide sequence ID" value="NC_010103.1"/>
</dbReference>
<dbReference type="SMR" id="A9MAL9"/>
<dbReference type="GeneID" id="97533857"/>
<dbReference type="KEGG" id="bcs:BCAN_A0857"/>
<dbReference type="HOGENOM" id="CLU_061495_2_0_5"/>
<dbReference type="PhylomeDB" id="A9MAL9"/>
<dbReference type="UniPathway" id="UPA00074">
    <property type="reaction ID" value="UER00131"/>
</dbReference>
<dbReference type="Proteomes" id="UP000001385">
    <property type="component" value="Chromosome I"/>
</dbReference>
<dbReference type="GO" id="GO:0005829">
    <property type="term" value="C:cytosol"/>
    <property type="evidence" value="ECO:0007669"/>
    <property type="project" value="TreeGrafter"/>
</dbReference>
<dbReference type="GO" id="GO:0005524">
    <property type="term" value="F:ATP binding"/>
    <property type="evidence" value="ECO:0007669"/>
    <property type="project" value="UniProtKB-KW"/>
</dbReference>
<dbReference type="GO" id="GO:0004639">
    <property type="term" value="F:phosphoribosylaminoimidazolesuccinocarboxamide synthase activity"/>
    <property type="evidence" value="ECO:0007669"/>
    <property type="project" value="UniProtKB-UniRule"/>
</dbReference>
<dbReference type="GO" id="GO:0006189">
    <property type="term" value="P:'de novo' IMP biosynthetic process"/>
    <property type="evidence" value="ECO:0007669"/>
    <property type="project" value="UniProtKB-UniRule"/>
</dbReference>
<dbReference type="GO" id="GO:0009236">
    <property type="term" value="P:cobalamin biosynthetic process"/>
    <property type="evidence" value="ECO:0007669"/>
    <property type="project" value="InterPro"/>
</dbReference>
<dbReference type="CDD" id="cd01415">
    <property type="entry name" value="SAICAR_synt_PurC"/>
    <property type="match status" value="1"/>
</dbReference>
<dbReference type="FunFam" id="3.30.470.20:FF:000006">
    <property type="entry name" value="Phosphoribosylaminoimidazole-succinocarboxamide synthase"/>
    <property type="match status" value="1"/>
</dbReference>
<dbReference type="Gene3D" id="3.30.470.20">
    <property type="entry name" value="ATP-grasp fold, B domain"/>
    <property type="match status" value="1"/>
</dbReference>
<dbReference type="Gene3D" id="3.30.200.20">
    <property type="entry name" value="Phosphorylase Kinase, domain 1"/>
    <property type="match status" value="1"/>
</dbReference>
<dbReference type="HAMAP" id="MF_00137">
    <property type="entry name" value="SAICAR_synth"/>
    <property type="match status" value="1"/>
</dbReference>
<dbReference type="InterPro" id="IPR028923">
    <property type="entry name" value="SAICAR_synt/ADE2_N"/>
</dbReference>
<dbReference type="InterPro" id="IPR033934">
    <property type="entry name" value="SAICAR_synt_PurC"/>
</dbReference>
<dbReference type="InterPro" id="IPR001636">
    <property type="entry name" value="SAICAR_synth"/>
</dbReference>
<dbReference type="InterPro" id="IPR050089">
    <property type="entry name" value="SAICAR_synthetase"/>
</dbReference>
<dbReference type="InterPro" id="IPR018236">
    <property type="entry name" value="SAICAR_synthetase_CS"/>
</dbReference>
<dbReference type="NCBIfam" id="TIGR00081">
    <property type="entry name" value="purC"/>
    <property type="match status" value="1"/>
</dbReference>
<dbReference type="PANTHER" id="PTHR43599">
    <property type="entry name" value="MULTIFUNCTIONAL PROTEIN ADE2"/>
    <property type="match status" value="1"/>
</dbReference>
<dbReference type="PANTHER" id="PTHR43599:SF3">
    <property type="entry name" value="SI:DKEY-6E2.2"/>
    <property type="match status" value="1"/>
</dbReference>
<dbReference type="Pfam" id="PF01259">
    <property type="entry name" value="SAICAR_synt"/>
    <property type="match status" value="1"/>
</dbReference>
<dbReference type="SUPFAM" id="SSF56104">
    <property type="entry name" value="SAICAR synthase-like"/>
    <property type="match status" value="1"/>
</dbReference>
<dbReference type="PROSITE" id="PS01057">
    <property type="entry name" value="SAICAR_SYNTHETASE_1"/>
    <property type="match status" value="1"/>
</dbReference>
<reference key="1">
    <citation type="submission" date="2007-10" db="EMBL/GenBank/DDBJ databases">
        <title>Brucella canis ATCC 23365 whole genome shotgun sequencing project.</title>
        <authorList>
            <person name="Setubal J.C."/>
            <person name="Bowns C."/>
            <person name="Boyle S."/>
            <person name="Crasta O.R."/>
            <person name="Czar M.J."/>
            <person name="Dharmanolla C."/>
            <person name="Gillespie J.J."/>
            <person name="Kenyon R.W."/>
            <person name="Lu J."/>
            <person name="Mane S."/>
            <person name="Mohapatra S."/>
            <person name="Nagrani S."/>
            <person name="Purkayastha A."/>
            <person name="Rajasimha H.K."/>
            <person name="Shallom J.M."/>
            <person name="Shallom S."/>
            <person name="Shukla M."/>
            <person name="Snyder E.E."/>
            <person name="Sobral B.W."/>
            <person name="Wattam A.R."/>
            <person name="Will R."/>
            <person name="Williams K."/>
            <person name="Yoo H."/>
            <person name="Bruce D."/>
            <person name="Detter C."/>
            <person name="Munk C."/>
            <person name="Brettin T.S."/>
        </authorList>
    </citation>
    <scope>NUCLEOTIDE SEQUENCE [LARGE SCALE GENOMIC DNA]</scope>
    <source>
        <strain>ATCC 23365 / NCTC 10854 / RM-666</strain>
    </source>
</reference>
<name>PUR7_BRUC2</name>
<organism>
    <name type="scientific">Brucella canis (strain ATCC 23365 / NCTC 10854 / RM-666)</name>
    <dbReference type="NCBI Taxonomy" id="483179"/>
    <lineage>
        <taxon>Bacteria</taxon>
        <taxon>Pseudomonadati</taxon>
        <taxon>Pseudomonadota</taxon>
        <taxon>Alphaproteobacteria</taxon>
        <taxon>Hyphomicrobiales</taxon>
        <taxon>Brucellaceae</taxon>
        <taxon>Brucella/Ochrobactrum group</taxon>
        <taxon>Brucella</taxon>
    </lineage>
</organism>
<sequence length="254" mass="28956">MNRRRRIYEGKAKILYEGPEPGTLVQFFKDDATAFNAKKHEVIDGKGVLNNRISEHIFTQLNRIGIPTHFIRRLNMREQLIKEVEIIPLEVVVRNVAAGSLAKRLGLEEGTILPRSIIEFYYKADALDDPMVTEEHITAFGWASPQEIDDIMALAIRVNDFLTGLFLGIGIQLVDFKMECGRLWEGDMMRIVVADEISPDSARLWDITTNDKLDKDRFRRDMGGLVEAYQEVARRLGIMNENDTPRPSGPTLVK</sequence>
<evidence type="ECO:0000255" key="1">
    <source>
        <dbReference type="HAMAP-Rule" id="MF_00137"/>
    </source>
</evidence>
<accession>A9MAL9</accession>
<gene>
    <name evidence="1" type="primary">purC</name>
    <name type="ordered locus">BCAN_A0857</name>
</gene>